<reference key="1">
    <citation type="journal article" date="2000" name="Science">
        <title>Complete genome sequence of Neisseria meningitidis serogroup B strain MC58.</title>
        <authorList>
            <person name="Tettelin H."/>
            <person name="Saunders N.J."/>
            <person name="Heidelberg J.F."/>
            <person name="Jeffries A.C."/>
            <person name="Nelson K.E."/>
            <person name="Eisen J.A."/>
            <person name="Ketchum K.A."/>
            <person name="Hood D.W."/>
            <person name="Peden J.F."/>
            <person name="Dodson R.J."/>
            <person name="Nelson W.C."/>
            <person name="Gwinn M.L."/>
            <person name="DeBoy R.T."/>
            <person name="Peterson J.D."/>
            <person name="Hickey E.K."/>
            <person name="Haft D.H."/>
            <person name="Salzberg S.L."/>
            <person name="White O."/>
            <person name="Fleischmann R.D."/>
            <person name="Dougherty B.A."/>
            <person name="Mason T.M."/>
            <person name="Ciecko A."/>
            <person name="Parksey D.S."/>
            <person name="Blair E."/>
            <person name="Cittone H."/>
            <person name="Clark E.B."/>
            <person name="Cotton M.D."/>
            <person name="Utterback T.R."/>
            <person name="Khouri H.M."/>
            <person name="Qin H."/>
            <person name="Vamathevan J.J."/>
            <person name="Gill J."/>
            <person name="Scarlato V."/>
            <person name="Masignani V."/>
            <person name="Pizza M."/>
            <person name="Grandi G."/>
            <person name="Sun L."/>
            <person name="Smith H.O."/>
            <person name="Fraser C.M."/>
            <person name="Moxon E.R."/>
            <person name="Rappuoli R."/>
            <person name="Venter J.C."/>
        </authorList>
    </citation>
    <scope>NUCLEOTIDE SEQUENCE [LARGE SCALE GENOMIC DNA]</scope>
    <source>
        <strain>ATCC BAA-335 / MC58</strain>
    </source>
</reference>
<name>AROE_NEIMB</name>
<organism>
    <name type="scientific">Neisseria meningitidis serogroup B (strain ATCC BAA-335 / MC58)</name>
    <dbReference type="NCBI Taxonomy" id="122586"/>
    <lineage>
        <taxon>Bacteria</taxon>
        <taxon>Pseudomonadati</taxon>
        <taxon>Pseudomonadota</taxon>
        <taxon>Betaproteobacteria</taxon>
        <taxon>Neisseriales</taxon>
        <taxon>Neisseriaceae</taxon>
        <taxon>Neisseria</taxon>
    </lineage>
</organism>
<protein>
    <recommendedName>
        <fullName evidence="1">Shikimate dehydrogenase (NADP(+))</fullName>
        <shortName evidence="1">SDH</shortName>
        <ecNumber evidence="1">1.1.1.25</ecNumber>
    </recommendedName>
</protein>
<sequence>MTALPRYAVFGNPVAHSKSPQIHQQFALQEGVDIEYERICADIGGFAQAVSTFFETGGCGANVTVPFKQEAFHLADEHSERALAAGAVNTLIPLKNGKLRGDNTDGIGLTNDITQVKNIAIEGKTILLLGAGGAVRGVIPVLKEHRPARIVIANRTRAKAEELAQLFGIEAVPMADVNGGFDIIINGTSGGLNGQIPDIPPDIFQNCALAYDMVYGCAAKPFLDFARQSGAKKTADGLGMLVGQAAASYALWRGFTPDIRPVIEYMKAL</sequence>
<feature type="chain" id="PRO_0000136020" description="Shikimate dehydrogenase (NADP(+))">
    <location>
        <begin position="1"/>
        <end position="269"/>
    </location>
</feature>
<feature type="active site" description="Proton acceptor" evidence="1">
    <location>
        <position position="68"/>
    </location>
</feature>
<feature type="binding site" evidence="1">
    <location>
        <begin position="17"/>
        <end position="19"/>
    </location>
    <ligand>
        <name>shikimate</name>
        <dbReference type="ChEBI" id="CHEBI:36208"/>
    </ligand>
</feature>
<feature type="binding site" evidence="1">
    <location>
        <position position="64"/>
    </location>
    <ligand>
        <name>shikimate</name>
        <dbReference type="ChEBI" id="CHEBI:36208"/>
    </ligand>
</feature>
<feature type="binding site" evidence="1">
    <location>
        <position position="80"/>
    </location>
    <ligand>
        <name>NADP(+)</name>
        <dbReference type="ChEBI" id="CHEBI:58349"/>
    </ligand>
</feature>
<feature type="binding site" evidence="1">
    <location>
        <position position="89"/>
    </location>
    <ligand>
        <name>shikimate</name>
        <dbReference type="ChEBI" id="CHEBI:36208"/>
    </ligand>
</feature>
<feature type="binding site" evidence="1">
    <location>
        <position position="105"/>
    </location>
    <ligand>
        <name>shikimate</name>
        <dbReference type="ChEBI" id="CHEBI:36208"/>
    </ligand>
</feature>
<feature type="binding site" evidence="1">
    <location>
        <begin position="130"/>
        <end position="134"/>
    </location>
    <ligand>
        <name>NADP(+)</name>
        <dbReference type="ChEBI" id="CHEBI:58349"/>
    </ligand>
</feature>
<feature type="binding site" evidence="1">
    <location>
        <begin position="154"/>
        <end position="159"/>
    </location>
    <ligand>
        <name>NADP(+)</name>
        <dbReference type="ChEBI" id="CHEBI:58349"/>
    </ligand>
</feature>
<feature type="binding site" evidence="1">
    <location>
        <position position="213"/>
    </location>
    <ligand>
        <name>NADP(+)</name>
        <dbReference type="ChEBI" id="CHEBI:58349"/>
    </ligand>
</feature>
<feature type="binding site" evidence="1">
    <location>
        <position position="215"/>
    </location>
    <ligand>
        <name>shikimate</name>
        <dbReference type="ChEBI" id="CHEBI:36208"/>
    </ligand>
</feature>
<feature type="binding site" evidence="1">
    <location>
        <position position="237"/>
    </location>
    <ligand>
        <name>NADP(+)</name>
        <dbReference type="ChEBI" id="CHEBI:58349"/>
    </ligand>
</feature>
<gene>
    <name evidence="1" type="primary">aroE</name>
    <name type="ordered locus">NMB0358</name>
</gene>
<keyword id="KW-0028">Amino-acid biosynthesis</keyword>
<keyword id="KW-0057">Aromatic amino acid biosynthesis</keyword>
<keyword id="KW-0521">NADP</keyword>
<keyword id="KW-0560">Oxidoreductase</keyword>
<keyword id="KW-1185">Reference proteome</keyword>
<accession>P56992</accession>
<evidence type="ECO:0000255" key="1">
    <source>
        <dbReference type="HAMAP-Rule" id="MF_00222"/>
    </source>
</evidence>
<dbReference type="EC" id="1.1.1.25" evidence="1"/>
<dbReference type="EMBL" id="AE002098">
    <property type="protein sequence ID" value="AAF40801.1"/>
    <property type="molecule type" value="Genomic_DNA"/>
</dbReference>
<dbReference type="PIR" id="E81208">
    <property type="entry name" value="E81208"/>
</dbReference>
<dbReference type="RefSeq" id="NP_273407.1">
    <property type="nucleotide sequence ID" value="NC_003112.2"/>
</dbReference>
<dbReference type="RefSeq" id="WP_002224888.1">
    <property type="nucleotide sequence ID" value="NC_003112.2"/>
</dbReference>
<dbReference type="SMR" id="P56992"/>
<dbReference type="FunCoup" id="P56992">
    <property type="interactions" value="164"/>
</dbReference>
<dbReference type="STRING" id="122586.NMB0358"/>
<dbReference type="PaxDb" id="122586-NMB0358"/>
<dbReference type="KEGG" id="nme:NMB0358"/>
<dbReference type="PATRIC" id="fig|122586.8.peg.452"/>
<dbReference type="HOGENOM" id="CLU_044063_2_1_4"/>
<dbReference type="InParanoid" id="P56992"/>
<dbReference type="OrthoDB" id="9776868at2"/>
<dbReference type="UniPathway" id="UPA00053">
    <property type="reaction ID" value="UER00087"/>
</dbReference>
<dbReference type="Proteomes" id="UP000000425">
    <property type="component" value="Chromosome"/>
</dbReference>
<dbReference type="GO" id="GO:0005829">
    <property type="term" value="C:cytosol"/>
    <property type="evidence" value="ECO:0000318"/>
    <property type="project" value="GO_Central"/>
</dbReference>
<dbReference type="GO" id="GO:0050661">
    <property type="term" value="F:NADP binding"/>
    <property type="evidence" value="ECO:0000318"/>
    <property type="project" value="GO_Central"/>
</dbReference>
<dbReference type="GO" id="GO:0004764">
    <property type="term" value="F:shikimate 3-dehydrogenase (NADP+) activity"/>
    <property type="evidence" value="ECO:0000318"/>
    <property type="project" value="GO_Central"/>
</dbReference>
<dbReference type="GO" id="GO:0008652">
    <property type="term" value="P:amino acid biosynthetic process"/>
    <property type="evidence" value="ECO:0007669"/>
    <property type="project" value="UniProtKB-KW"/>
</dbReference>
<dbReference type="GO" id="GO:0009073">
    <property type="term" value="P:aromatic amino acid family biosynthetic process"/>
    <property type="evidence" value="ECO:0007669"/>
    <property type="project" value="UniProtKB-KW"/>
</dbReference>
<dbReference type="GO" id="GO:0009423">
    <property type="term" value="P:chorismate biosynthetic process"/>
    <property type="evidence" value="ECO:0000318"/>
    <property type="project" value="GO_Central"/>
</dbReference>
<dbReference type="GO" id="GO:0019632">
    <property type="term" value="P:shikimate metabolic process"/>
    <property type="evidence" value="ECO:0000318"/>
    <property type="project" value="GO_Central"/>
</dbReference>
<dbReference type="CDD" id="cd01065">
    <property type="entry name" value="NAD_bind_Shikimate_DH"/>
    <property type="match status" value="1"/>
</dbReference>
<dbReference type="FunFam" id="3.40.50.10860:FF:000006">
    <property type="entry name" value="Shikimate dehydrogenase (NADP(+))"/>
    <property type="match status" value="1"/>
</dbReference>
<dbReference type="FunFam" id="3.40.50.720:FF:000697">
    <property type="entry name" value="Shikimate dehydrogenase (NADP(+))"/>
    <property type="match status" value="1"/>
</dbReference>
<dbReference type="Gene3D" id="3.40.50.10860">
    <property type="entry name" value="Leucine Dehydrogenase, chain A, domain 1"/>
    <property type="match status" value="1"/>
</dbReference>
<dbReference type="Gene3D" id="3.40.50.720">
    <property type="entry name" value="NAD(P)-binding Rossmann-like Domain"/>
    <property type="match status" value="1"/>
</dbReference>
<dbReference type="HAMAP" id="MF_00222">
    <property type="entry name" value="Shikimate_DH_AroE"/>
    <property type="match status" value="1"/>
</dbReference>
<dbReference type="InterPro" id="IPR046346">
    <property type="entry name" value="Aminoacid_DH-like_N_sf"/>
</dbReference>
<dbReference type="InterPro" id="IPR036291">
    <property type="entry name" value="NAD(P)-bd_dom_sf"/>
</dbReference>
<dbReference type="InterPro" id="IPR041121">
    <property type="entry name" value="SDH_C"/>
</dbReference>
<dbReference type="InterPro" id="IPR011342">
    <property type="entry name" value="Shikimate_DH"/>
</dbReference>
<dbReference type="InterPro" id="IPR013708">
    <property type="entry name" value="Shikimate_DH-bd_N"/>
</dbReference>
<dbReference type="InterPro" id="IPR022893">
    <property type="entry name" value="Shikimate_DH_fam"/>
</dbReference>
<dbReference type="InterPro" id="IPR006151">
    <property type="entry name" value="Shikm_DH/Glu-tRNA_Rdtase"/>
</dbReference>
<dbReference type="NCBIfam" id="TIGR00507">
    <property type="entry name" value="aroE"/>
    <property type="match status" value="1"/>
</dbReference>
<dbReference type="NCBIfam" id="NF001310">
    <property type="entry name" value="PRK00258.1-2"/>
    <property type="match status" value="1"/>
</dbReference>
<dbReference type="PANTHER" id="PTHR21089:SF1">
    <property type="entry name" value="BIFUNCTIONAL 3-DEHYDROQUINATE DEHYDRATASE_SHIKIMATE DEHYDROGENASE, CHLOROPLASTIC"/>
    <property type="match status" value="1"/>
</dbReference>
<dbReference type="PANTHER" id="PTHR21089">
    <property type="entry name" value="SHIKIMATE DEHYDROGENASE"/>
    <property type="match status" value="1"/>
</dbReference>
<dbReference type="Pfam" id="PF18317">
    <property type="entry name" value="SDH_C"/>
    <property type="match status" value="1"/>
</dbReference>
<dbReference type="Pfam" id="PF01488">
    <property type="entry name" value="Shikimate_DH"/>
    <property type="match status" value="1"/>
</dbReference>
<dbReference type="Pfam" id="PF08501">
    <property type="entry name" value="Shikimate_dh_N"/>
    <property type="match status" value="1"/>
</dbReference>
<dbReference type="SUPFAM" id="SSF53223">
    <property type="entry name" value="Aminoacid dehydrogenase-like, N-terminal domain"/>
    <property type="match status" value="1"/>
</dbReference>
<dbReference type="SUPFAM" id="SSF51735">
    <property type="entry name" value="NAD(P)-binding Rossmann-fold domains"/>
    <property type="match status" value="1"/>
</dbReference>
<proteinExistence type="inferred from homology"/>
<comment type="function">
    <text evidence="1">Involved in the biosynthesis of the chorismate, which leads to the biosynthesis of aromatic amino acids. Catalyzes the reversible NADPH linked reduction of 3-dehydroshikimate (DHSA) to yield shikimate (SA).</text>
</comment>
<comment type="catalytic activity">
    <reaction evidence="1">
        <text>shikimate + NADP(+) = 3-dehydroshikimate + NADPH + H(+)</text>
        <dbReference type="Rhea" id="RHEA:17737"/>
        <dbReference type="ChEBI" id="CHEBI:15378"/>
        <dbReference type="ChEBI" id="CHEBI:16630"/>
        <dbReference type="ChEBI" id="CHEBI:36208"/>
        <dbReference type="ChEBI" id="CHEBI:57783"/>
        <dbReference type="ChEBI" id="CHEBI:58349"/>
        <dbReference type="EC" id="1.1.1.25"/>
    </reaction>
</comment>
<comment type="pathway">
    <text evidence="1">Metabolic intermediate biosynthesis; chorismate biosynthesis; chorismate from D-erythrose 4-phosphate and phosphoenolpyruvate: step 4/7.</text>
</comment>
<comment type="subunit">
    <text evidence="1">Homodimer.</text>
</comment>
<comment type="similarity">
    <text evidence="1">Belongs to the shikimate dehydrogenase family.</text>
</comment>